<gene>
    <name evidence="1" type="primary">pgi</name>
    <name type="ordered locus">FTA_1561</name>
</gene>
<evidence type="ECO:0000255" key="1">
    <source>
        <dbReference type="HAMAP-Rule" id="MF_00473"/>
    </source>
</evidence>
<protein>
    <recommendedName>
        <fullName evidence="1">Glucose-6-phosphate isomerase</fullName>
        <shortName evidence="1">GPI</shortName>
        <ecNumber evidence="1">5.3.1.9</ecNumber>
    </recommendedName>
    <alternativeName>
        <fullName evidence="1">Phosphoglucose isomerase</fullName>
        <shortName evidence="1">PGI</shortName>
    </alternativeName>
    <alternativeName>
        <fullName evidence="1">Phosphohexose isomerase</fullName>
        <shortName evidence="1">PHI</shortName>
    </alternativeName>
</protein>
<sequence>MLFCDDSKKYLKEQNINLKNEFDKDDKRVEKFSLKHQNIYFDYSKNLINNYILKSLLESAEKSSLKDKIKQMFNGAKINSTEHRAVLHTALRDLSSTPLIVDGQDIRQEVTKEKQRVKELVEKVVSGRWRGFSGKKITDIVNIGIGGSDLGPKMVVRALQPYHCTDLKVHFVSNVDADSLLQALHVVDPETTLFIIASKSFSTEETLLNSISAREWLLDHYEDEKAVANHFVAISSKLDKVKEFGIDLEHCYKMWDWVGGRYSLWSSIGMSIAFAIGYDNFEKLLAGAYSVDKYFKETEFSKNIPVIMALLASYYSCTYNSQSQALLPYDERLCYFVDYLQQADMESNGKSVNIAGGTVNYQTGVVLWGGVGTNGQHAFHQLLHQGNIFIPVDFIAIATSHHNYDNHQQALLANCFAQSQALMFGQSYDMVYNELLKSGLNETQAKKLAAHKVIPGNRPSTTILLDELSPYSLGALIALYEHKIFVQGVLWDINSYDQWGVELGKKLGKNILKAMNDDSSDEYQNLDDSTRQLIAKVKNK</sequence>
<name>G6PI_FRATF</name>
<reference key="1">
    <citation type="journal article" date="2009" name="PLoS ONE">
        <title>Complete genome sequence of Francisella tularensis subspecies holarctica FTNF002-00.</title>
        <authorList>
            <person name="Barabote R.D."/>
            <person name="Xie G."/>
            <person name="Brettin T.S."/>
            <person name="Hinrichs S.H."/>
            <person name="Fey P.D."/>
            <person name="Jay J.J."/>
            <person name="Engle J.L."/>
            <person name="Godbole S.D."/>
            <person name="Noronha J.M."/>
            <person name="Scheuermann R.H."/>
            <person name="Zhou L.W."/>
            <person name="Lion C."/>
            <person name="Dempsey M.P."/>
        </authorList>
    </citation>
    <scope>NUCLEOTIDE SEQUENCE [LARGE SCALE GENOMIC DNA]</scope>
    <source>
        <strain>FTNF002-00 / FTA</strain>
    </source>
</reference>
<proteinExistence type="inferred from homology"/>
<organism>
    <name type="scientific">Francisella tularensis subsp. holarctica (strain FTNF002-00 / FTA)</name>
    <dbReference type="NCBI Taxonomy" id="458234"/>
    <lineage>
        <taxon>Bacteria</taxon>
        <taxon>Pseudomonadati</taxon>
        <taxon>Pseudomonadota</taxon>
        <taxon>Gammaproteobacteria</taxon>
        <taxon>Thiotrichales</taxon>
        <taxon>Francisellaceae</taxon>
        <taxon>Francisella</taxon>
    </lineage>
</organism>
<comment type="function">
    <text evidence="1">Catalyzes the reversible isomerization of glucose-6-phosphate to fructose-6-phosphate.</text>
</comment>
<comment type="catalytic activity">
    <reaction evidence="1">
        <text>alpha-D-glucose 6-phosphate = beta-D-fructose 6-phosphate</text>
        <dbReference type="Rhea" id="RHEA:11816"/>
        <dbReference type="ChEBI" id="CHEBI:57634"/>
        <dbReference type="ChEBI" id="CHEBI:58225"/>
        <dbReference type="EC" id="5.3.1.9"/>
    </reaction>
</comment>
<comment type="pathway">
    <text evidence="1">Carbohydrate biosynthesis; gluconeogenesis.</text>
</comment>
<comment type="pathway">
    <text evidence="1">Carbohydrate degradation; glycolysis; D-glyceraldehyde 3-phosphate and glycerone phosphate from D-glucose: step 2/4.</text>
</comment>
<comment type="subcellular location">
    <subcellularLocation>
        <location evidence="1">Cytoplasm</location>
    </subcellularLocation>
</comment>
<comment type="similarity">
    <text evidence="1">Belongs to the GPI family.</text>
</comment>
<keyword id="KW-0963">Cytoplasm</keyword>
<keyword id="KW-0312">Gluconeogenesis</keyword>
<keyword id="KW-0324">Glycolysis</keyword>
<keyword id="KW-0413">Isomerase</keyword>
<accession>A7NDI3</accession>
<feature type="chain" id="PRO_1000013966" description="Glucose-6-phosphate isomerase">
    <location>
        <begin position="1"/>
        <end position="540"/>
    </location>
</feature>
<feature type="active site" description="Proton donor" evidence="1">
    <location>
        <position position="346"/>
    </location>
</feature>
<feature type="active site" evidence="1">
    <location>
        <position position="377"/>
    </location>
</feature>
<feature type="active site" evidence="1">
    <location>
        <position position="505"/>
    </location>
</feature>
<dbReference type="EC" id="5.3.1.9" evidence="1"/>
<dbReference type="EMBL" id="CP000803">
    <property type="protein sequence ID" value="ABU62036.1"/>
    <property type="molecule type" value="Genomic_DNA"/>
</dbReference>
<dbReference type="RefSeq" id="WP_003016778.1">
    <property type="nucleotide sequence ID" value="NC_009749.1"/>
</dbReference>
<dbReference type="SMR" id="A7NDI3"/>
<dbReference type="KEGG" id="fta:FTA_1561"/>
<dbReference type="HOGENOM" id="CLU_017947_3_1_6"/>
<dbReference type="UniPathway" id="UPA00109">
    <property type="reaction ID" value="UER00181"/>
</dbReference>
<dbReference type="UniPathway" id="UPA00138"/>
<dbReference type="GO" id="GO:0005829">
    <property type="term" value="C:cytosol"/>
    <property type="evidence" value="ECO:0007669"/>
    <property type="project" value="TreeGrafter"/>
</dbReference>
<dbReference type="GO" id="GO:0097367">
    <property type="term" value="F:carbohydrate derivative binding"/>
    <property type="evidence" value="ECO:0007669"/>
    <property type="project" value="InterPro"/>
</dbReference>
<dbReference type="GO" id="GO:0004347">
    <property type="term" value="F:glucose-6-phosphate isomerase activity"/>
    <property type="evidence" value="ECO:0007669"/>
    <property type="project" value="UniProtKB-UniRule"/>
</dbReference>
<dbReference type="GO" id="GO:0048029">
    <property type="term" value="F:monosaccharide binding"/>
    <property type="evidence" value="ECO:0007669"/>
    <property type="project" value="TreeGrafter"/>
</dbReference>
<dbReference type="GO" id="GO:0006094">
    <property type="term" value="P:gluconeogenesis"/>
    <property type="evidence" value="ECO:0007669"/>
    <property type="project" value="UniProtKB-UniRule"/>
</dbReference>
<dbReference type="GO" id="GO:0051156">
    <property type="term" value="P:glucose 6-phosphate metabolic process"/>
    <property type="evidence" value="ECO:0007669"/>
    <property type="project" value="TreeGrafter"/>
</dbReference>
<dbReference type="GO" id="GO:0006096">
    <property type="term" value="P:glycolytic process"/>
    <property type="evidence" value="ECO:0007669"/>
    <property type="project" value="UniProtKB-UniRule"/>
</dbReference>
<dbReference type="CDD" id="cd05015">
    <property type="entry name" value="SIS_PGI_1"/>
    <property type="match status" value="1"/>
</dbReference>
<dbReference type="CDD" id="cd05016">
    <property type="entry name" value="SIS_PGI_2"/>
    <property type="match status" value="1"/>
</dbReference>
<dbReference type="Gene3D" id="1.10.1390.10">
    <property type="match status" value="1"/>
</dbReference>
<dbReference type="Gene3D" id="3.40.50.10490">
    <property type="entry name" value="Glucose-6-phosphate isomerase like protein, domain 1"/>
    <property type="match status" value="2"/>
</dbReference>
<dbReference type="HAMAP" id="MF_00473">
    <property type="entry name" value="G6P_isomerase"/>
    <property type="match status" value="1"/>
</dbReference>
<dbReference type="InterPro" id="IPR001672">
    <property type="entry name" value="G6P_Isomerase"/>
</dbReference>
<dbReference type="InterPro" id="IPR023096">
    <property type="entry name" value="G6P_Isomerase_C"/>
</dbReference>
<dbReference type="InterPro" id="IPR018189">
    <property type="entry name" value="Phosphoglucose_isomerase_CS"/>
</dbReference>
<dbReference type="InterPro" id="IPR046348">
    <property type="entry name" value="SIS_dom_sf"/>
</dbReference>
<dbReference type="InterPro" id="IPR035476">
    <property type="entry name" value="SIS_PGI_1"/>
</dbReference>
<dbReference type="InterPro" id="IPR035482">
    <property type="entry name" value="SIS_PGI_2"/>
</dbReference>
<dbReference type="NCBIfam" id="NF001211">
    <property type="entry name" value="PRK00179.1"/>
    <property type="match status" value="1"/>
</dbReference>
<dbReference type="PANTHER" id="PTHR11469">
    <property type="entry name" value="GLUCOSE-6-PHOSPHATE ISOMERASE"/>
    <property type="match status" value="1"/>
</dbReference>
<dbReference type="PANTHER" id="PTHR11469:SF1">
    <property type="entry name" value="GLUCOSE-6-PHOSPHATE ISOMERASE"/>
    <property type="match status" value="1"/>
</dbReference>
<dbReference type="Pfam" id="PF00342">
    <property type="entry name" value="PGI"/>
    <property type="match status" value="1"/>
</dbReference>
<dbReference type="PRINTS" id="PR00662">
    <property type="entry name" value="G6PISOMERASE"/>
</dbReference>
<dbReference type="SUPFAM" id="SSF53697">
    <property type="entry name" value="SIS domain"/>
    <property type="match status" value="1"/>
</dbReference>
<dbReference type="PROSITE" id="PS00765">
    <property type="entry name" value="P_GLUCOSE_ISOMERASE_1"/>
    <property type="match status" value="1"/>
</dbReference>
<dbReference type="PROSITE" id="PS00174">
    <property type="entry name" value="P_GLUCOSE_ISOMERASE_2"/>
    <property type="match status" value="1"/>
</dbReference>
<dbReference type="PROSITE" id="PS51463">
    <property type="entry name" value="P_GLUCOSE_ISOMERASE_3"/>
    <property type="match status" value="1"/>
</dbReference>